<reference key="1">
    <citation type="journal article" date="2002" name="Biochem. Biophys. Res. Commun.">
        <title>Isolation and identification of EG-VEGF/prokineticins as cognate ligands for two orphan G-protein-coupled receptors.</title>
        <authorList>
            <person name="Masuda Y."/>
            <person name="Takatsu Y."/>
            <person name="Terao Y."/>
            <person name="Kumano S."/>
            <person name="Ishibashi Y."/>
            <person name="Suenaga M."/>
            <person name="Abe M."/>
            <person name="Fukusumi S."/>
            <person name="Watanabe T."/>
            <person name="Shintani Y."/>
            <person name="Yamada T."/>
            <person name="Hinuma S."/>
            <person name="Inatomi N."/>
            <person name="Ohtaki T."/>
            <person name="Onda H."/>
            <person name="Fujino M."/>
        </authorList>
    </citation>
    <scope>NUCLEOTIDE SEQUENCE [MRNA]</scope>
    <source>
        <strain>Sprague-Dawley</strain>
    </source>
</reference>
<reference key="2">
    <citation type="journal article" date="2005" name="Genomics">
        <title>Fine mapping of radiation susceptibility and gene expression analysis of LEC congenic rat lines.</title>
        <authorList>
            <person name="Tsuji A.B."/>
            <person name="Sugyo A."/>
            <person name="Ogiu T."/>
            <person name="Sagara M."/>
            <person name="Kimura T."/>
            <person name="Ishikawa A."/>
            <person name="Sudo H."/>
            <person name="Ohtsuki M."/>
            <person name="Aburatani H."/>
            <person name="Imai T."/>
            <person name="Harada Y.N."/>
        </authorList>
    </citation>
    <scope>NUCLEOTIDE SEQUENCE [MRNA]</scope>
    <source>
        <strain>Fischer 344/DuCrj</strain>
        <strain>LEC/Crj</strain>
    </source>
</reference>
<organism>
    <name type="scientific">Rattus norvegicus</name>
    <name type="common">Rat</name>
    <dbReference type="NCBI Taxonomy" id="10116"/>
    <lineage>
        <taxon>Eukaryota</taxon>
        <taxon>Metazoa</taxon>
        <taxon>Chordata</taxon>
        <taxon>Craniata</taxon>
        <taxon>Vertebrata</taxon>
        <taxon>Euteleostomi</taxon>
        <taxon>Mammalia</taxon>
        <taxon>Eutheria</taxon>
        <taxon>Euarchontoglires</taxon>
        <taxon>Glires</taxon>
        <taxon>Rodentia</taxon>
        <taxon>Myomorpha</taxon>
        <taxon>Muroidea</taxon>
        <taxon>Muridae</taxon>
        <taxon>Murinae</taxon>
        <taxon>Rattus</taxon>
    </lineage>
</organism>
<keyword id="KW-1003">Cell membrane</keyword>
<keyword id="KW-1015">Disulfide bond</keyword>
<keyword id="KW-0297">G-protein coupled receptor</keyword>
<keyword id="KW-0325">Glycoprotein</keyword>
<keyword id="KW-0472">Membrane</keyword>
<keyword id="KW-0675">Receptor</keyword>
<keyword id="KW-1185">Reference proteome</keyword>
<keyword id="KW-0807">Transducer</keyword>
<keyword id="KW-0812">Transmembrane</keyword>
<keyword id="KW-1133">Transmembrane helix</keyword>
<accession>Q8R416</accession>
<accession>Q4AEG4</accession>
<comment type="function">
    <text evidence="1">Receptor for prokineticin 1. Exclusively coupled to the G(q) subclass of heteromeric G proteins. Activation leads to mobilization of calcium, stimulation of phosphoinositide turnover and activation of p44/p42 mitogen-activated protein kinase. May play a role during early pregnancy (By similarity).</text>
</comment>
<comment type="subcellular location">
    <subcellularLocation>
        <location>Cell membrane</location>
        <topology>Multi-pass membrane protein</topology>
    </subcellularLocation>
</comment>
<comment type="tissue specificity">
    <text>Widely expressed in peripheral tissues with the highest level in the spleen and moderate levels in the adipose tissues, thymus, lung, kidney, testis, uterus and small intestine.</text>
</comment>
<comment type="similarity">
    <text evidence="3">Belongs to the G-protein coupled receptor 1 family.</text>
</comment>
<proteinExistence type="evidence at transcript level"/>
<protein>
    <recommendedName>
        <fullName>Prokineticin receptor 1</fullName>
        <shortName>PK-R1</shortName>
    </recommendedName>
    <alternativeName>
        <fullName>G-protein coupled receptor 73</fullName>
    </alternativeName>
    <alternativeName>
        <fullName>G-protein coupled receptor ZAQ</fullName>
    </alternativeName>
</protein>
<feature type="chain" id="PRO_0000070081" description="Prokineticin receptor 1">
    <location>
        <begin position="1"/>
        <end position="393"/>
    </location>
</feature>
<feature type="topological domain" description="Extracellular" evidence="2">
    <location>
        <begin position="1"/>
        <end position="62"/>
    </location>
</feature>
<feature type="transmembrane region" description="Helical; Name=1" evidence="2">
    <location>
        <begin position="63"/>
        <end position="83"/>
    </location>
</feature>
<feature type="topological domain" description="Cytoplasmic" evidence="2">
    <location>
        <begin position="84"/>
        <end position="98"/>
    </location>
</feature>
<feature type="transmembrane region" description="Helical; Name=2" evidence="2">
    <location>
        <begin position="99"/>
        <end position="119"/>
    </location>
</feature>
<feature type="topological domain" description="Extracellular" evidence="2">
    <location>
        <begin position="120"/>
        <end position="145"/>
    </location>
</feature>
<feature type="transmembrane region" description="Helical; Name=3" evidence="2">
    <location>
        <begin position="146"/>
        <end position="166"/>
    </location>
</feature>
<feature type="topological domain" description="Cytoplasmic" evidence="2">
    <location>
        <begin position="167"/>
        <end position="179"/>
    </location>
</feature>
<feature type="transmembrane region" description="Helical; Name=4" evidence="2">
    <location>
        <begin position="180"/>
        <end position="200"/>
    </location>
</feature>
<feature type="topological domain" description="Extracellular" evidence="2">
    <location>
        <begin position="201"/>
        <end position="232"/>
    </location>
</feature>
<feature type="transmembrane region" description="Helical; Name=5" evidence="2">
    <location>
        <begin position="233"/>
        <end position="253"/>
    </location>
</feature>
<feature type="topological domain" description="Cytoplasmic" evidence="2">
    <location>
        <begin position="254"/>
        <end position="282"/>
    </location>
</feature>
<feature type="transmembrane region" description="Helical; Name=6" evidence="2">
    <location>
        <begin position="283"/>
        <end position="303"/>
    </location>
</feature>
<feature type="topological domain" description="Extracellular" evidence="2">
    <location>
        <begin position="304"/>
        <end position="322"/>
    </location>
</feature>
<feature type="transmembrane region" description="Helical; Name=7" evidence="2">
    <location>
        <begin position="323"/>
        <end position="343"/>
    </location>
</feature>
<feature type="topological domain" description="Cytoplasmic" evidence="2">
    <location>
        <begin position="344"/>
        <end position="393"/>
    </location>
</feature>
<feature type="glycosylation site" description="N-linked (GlcNAc...) asparagine" evidence="2">
    <location>
        <position position="11"/>
    </location>
</feature>
<feature type="disulfide bond" evidence="3">
    <location>
        <begin position="137"/>
        <end position="217"/>
    </location>
</feature>
<dbReference type="EMBL" id="AY089974">
    <property type="protein sequence ID" value="AAM11890.1"/>
    <property type="molecule type" value="mRNA"/>
</dbReference>
<dbReference type="EMBL" id="AB158419">
    <property type="protein sequence ID" value="BAE16991.1"/>
    <property type="molecule type" value="mRNA"/>
</dbReference>
<dbReference type="EMBL" id="AB158420">
    <property type="protein sequence ID" value="BAE16992.1"/>
    <property type="molecule type" value="mRNA"/>
</dbReference>
<dbReference type="RefSeq" id="NP_620433.1">
    <property type="nucleotide sequence ID" value="NM_138977.2"/>
</dbReference>
<dbReference type="RefSeq" id="XP_006236883.1">
    <property type="nucleotide sequence ID" value="XM_006236821.3"/>
</dbReference>
<dbReference type="SMR" id="Q8R416"/>
<dbReference type="FunCoup" id="Q8R416">
    <property type="interactions" value="139"/>
</dbReference>
<dbReference type="STRING" id="10116.ENSRNOP00000012913"/>
<dbReference type="GlyCosmos" id="Q8R416">
    <property type="glycosylation" value="1 site, No reported glycans"/>
</dbReference>
<dbReference type="GlyGen" id="Q8R416">
    <property type="glycosylation" value="1 site"/>
</dbReference>
<dbReference type="PhosphoSitePlus" id="Q8R416"/>
<dbReference type="PaxDb" id="10116-ENSRNOP00000012913"/>
<dbReference type="Ensembl" id="ENSRNOT00000012913.4">
    <property type="protein sequence ID" value="ENSRNOP00000012913.1"/>
    <property type="gene ID" value="ENSRNOG00000009556.4"/>
</dbReference>
<dbReference type="GeneID" id="192648"/>
<dbReference type="KEGG" id="rno:192648"/>
<dbReference type="UCSC" id="RGD:708443">
    <property type="organism name" value="rat"/>
</dbReference>
<dbReference type="AGR" id="RGD:708443"/>
<dbReference type="CTD" id="10887"/>
<dbReference type="RGD" id="708443">
    <property type="gene designation" value="Prokr1"/>
</dbReference>
<dbReference type="eggNOG" id="KOG3656">
    <property type="taxonomic scope" value="Eukaryota"/>
</dbReference>
<dbReference type="GeneTree" id="ENSGT00940000164891"/>
<dbReference type="HOGENOM" id="CLU_009579_6_0_1"/>
<dbReference type="InParanoid" id="Q8R416"/>
<dbReference type="OMA" id="CAATNYL"/>
<dbReference type="OrthoDB" id="10053194at2759"/>
<dbReference type="PhylomeDB" id="Q8R416"/>
<dbReference type="TreeFam" id="TF315303"/>
<dbReference type="Reactome" id="R-RNO-375276">
    <property type="pathway name" value="Peptide ligand-binding receptors"/>
</dbReference>
<dbReference type="Reactome" id="R-RNO-416476">
    <property type="pathway name" value="G alpha (q) signalling events"/>
</dbReference>
<dbReference type="PRO" id="PR:Q8R416"/>
<dbReference type="Proteomes" id="UP000002494">
    <property type="component" value="Chromosome 4"/>
</dbReference>
<dbReference type="Bgee" id="ENSRNOG00000009556">
    <property type="expression patterns" value="Expressed in spleen and 2 other cell types or tissues"/>
</dbReference>
<dbReference type="GO" id="GO:0005886">
    <property type="term" value="C:plasma membrane"/>
    <property type="evidence" value="ECO:0000318"/>
    <property type="project" value="GO_Central"/>
</dbReference>
<dbReference type="GO" id="GO:0004930">
    <property type="term" value="F:G protein-coupled receptor activity"/>
    <property type="evidence" value="ECO:0000315"/>
    <property type="project" value="RGD"/>
</dbReference>
<dbReference type="GO" id="GO:0004983">
    <property type="term" value="F:neuropeptide Y receptor activity"/>
    <property type="evidence" value="ECO:0007669"/>
    <property type="project" value="InterPro"/>
</dbReference>
<dbReference type="GO" id="GO:0032870">
    <property type="term" value="P:cellular response to hormone stimulus"/>
    <property type="evidence" value="ECO:0000318"/>
    <property type="project" value="GO_Central"/>
</dbReference>
<dbReference type="GO" id="GO:0007623">
    <property type="term" value="P:circadian rhythm"/>
    <property type="evidence" value="ECO:0000318"/>
    <property type="project" value="GO_Central"/>
</dbReference>
<dbReference type="GO" id="GO:0007186">
    <property type="term" value="P:G protein-coupled receptor signaling pathway"/>
    <property type="evidence" value="ECO:0000318"/>
    <property type="project" value="GO_Central"/>
</dbReference>
<dbReference type="GO" id="GO:0043066">
    <property type="term" value="P:negative regulation of apoptotic process"/>
    <property type="evidence" value="ECO:0000314"/>
    <property type="project" value="RGD"/>
</dbReference>
<dbReference type="CDD" id="cd15204">
    <property type="entry name" value="7tmA_prokineticin-R"/>
    <property type="match status" value="1"/>
</dbReference>
<dbReference type="FunFam" id="1.20.1070.10:FF:000069">
    <property type="entry name" value="Prokineticin receptor 2"/>
    <property type="match status" value="1"/>
</dbReference>
<dbReference type="Gene3D" id="1.20.1070.10">
    <property type="entry name" value="Rhodopsin 7-helix transmembrane proteins"/>
    <property type="match status" value="1"/>
</dbReference>
<dbReference type="InterPro" id="IPR000276">
    <property type="entry name" value="GPCR_Rhodpsn"/>
</dbReference>
<dbReference type="InterPro" id="IPR017452">
    <property type="entry name" value="GPCR_Rhodpsn_7TM"/>
</dbReference>
<dbReference type="InterPro" id="IPR000611">
    <property type="entry name" value="NPY_rcpt"/>
</dbReference>
<dbReference type="PANTHER" id="PTHR24238">
    <property type="entry name" value="G-PROTEIN COUPLED RECEPTOR"/>
    <property type="match status" value="1"/>
</dbReference>
<dbReference type="PANTHER" id="PTHR24238:SF74">
    <property type="entry name" value="PROKINETICIN RECEPTOR 2"/>
    <property type="match status" value="1"/>
</dbReference>
<dbReference type="Pfam" id="PF00001">
    <property type="entry name" value="7tm_1"/>
    <property type="match status" value="1"/>
</dbReference>
<dbReference type="PRINTS" id="PR00237">
    <property type="entry name" value="GPCRRHODOPSN"/>
</dbReference>
<dbReference type="PRINTS" id="PR01012">
    <property type="entry name" value="NRPEPTIDEYR"/>
</dbReference>
<dbReference type="SUPFAM" id="SSF81321">
    <property type="entry name" value="Family A G protein-coupled receptor-like"/>
    <property type="match status" value="1"/>
</dbReference>
<dbReference type="PROSITE" id="PS00237">
    <property type="entry name" value="G_PROTEIN_RECEP_F1_1"/>
    <property type="match status" value="1"/>
</dbReference>
<dbReference type="PROSITE" id="PS50262">
    <property type="entry name" value="G_PROTEIN_RECEP_F1_2"/>
    <property type="match status" value="1"/>
</dbReference>
<gene>
    <name type="primary">Prokr1</name>
    <name type="synonym">Gpr73</name>
    <name type="synonym">Pkr1</name>
</gene>
<name>PKR1_RAT</name>
<sequence length="393" mass="44507">METTVGTLGENTTNTFTDFFSARDGSGAETSPLPFTFSYGDYDMPSDEEEDVTNSRTFFAAKIVIGMALVGIMLVCGIGNFIFITALARYKKLRNLTNLLIANLAISDFLVAIVCCPFEMDYYVVRQLSWEHGHVLCASVNYLRTVSLYVSTNALLAIAIDRYLAIVHPLRPRMKCQTAAGLIFLVWSVSILIAIPAAYFTTETVLVIVESQEKIFCGQIWPVDQQFYYRSYFLLVFGLEFVGPVIAMTLCYARVSRELWFKAVPGFQTEQIRRRLRCRRRTVLGLVCVLSAYVLCWAPFYGFTIVRDFFPSVFVKEKHYLTAFYVVECIAMSNSMINTLCFVTVRNNTSKYLKRILRLQWRASPSGSKASADLDLRTTGIPATEEVDCIRLK</sequence>
<evidence type="ECO:0000250" key="1"/>
<evidence type="ECO:0000255" key="2"/>
<evidence type="ECO:0000255" key="3">
    <source>
        <dbReference type="PROSITE-ProRule" id="PRU00521"/>
    </source>
</evidence>